<gene>
    <name evidence="1" type="primary">cbiN</name>
    <name type="ordered locus">STY2225</name>
    <name type="ordered locus">t0852</name>
</gene>
<reference key="1">
    <citation type="journal article" date="2001" name="Nature">
        <title>Complete genome sequence of a multiple drug resistant Salmonella enterica serovar Typhi CT18.</title>
        <authorList>
            <person name="Parkhill J."/>
            <person name="Dougan G."/>
            <person name="James K.D."/>
            <person name="Thomson N.R."/>
            <person name="Pickard D."/>
            <person name="Wain J."/>
            <person name="Churcher C.M."/>
            <person name="Mungall K.L."/>
            <person name="Bentley S.D."/>
            <person name="Holden M.T.G."/>
            <person name="Sebaihia M."/>
            <person name="Baker S."/>
            <person name="Basham D."/>
            <person name="Brooks K."/>
            <person name="Chillingworth T."/>
            <person name="Connerton P."/>
            <person name="Cronin A."/>
            <person name="Davis P."/>
            <person name="Davies R.M."/>
            <person name="Dowd L."/>
            <person name="White N."/>
            <person name="Farrar J."/>
            <person name="Feltwell T."/>
            <person name="Hamlin N."/>
            <person name="Haque A."/>
            <person name="Hien T.T."/>
            <person name="Holroyd S."/>
            <person name="Jagels K."/>
            <person name="Krogh A."/>
            <person name="Larsen T.S."/>
            <person name="Leather S."/>
            <person name="Moule S."/>
            <person name="O'Gaora P."/>
            <person name="Parry C."/>
            <person name="Quail M.A."/>
            <person name="Rutherford K.M."/>
            <person name="Simmonds M."/>
            <person name="Skelton J."/>
            <person name="Stevens K."/>
            <person name="Whitehead S."/>
            <person name="Barrell B.G."/>
        </authorList>
    </citation>
    <scope>NUCLEOTIDE SEQUENCE [LARGE SCALE GENOMIC DNA]</scope>
    <source>
        <strain>CT18</strain>
    </source>
</reference>
<reference key="2">
    <citation type="journal article" date="2003" name="J. Bacteriol.">
        <title>Comparative genomics of Salmonella enterica serovar Typhi strains Ty2 and CT18.</title>
        <authorList>
            <person name="Deng W."/>
            <person name="Liou S.-R."/>
            <person name="Plunkett G. III"/>
            <person name="Mayhew G.F."/>
            <person name="Rose D.J."/>
            <person name="Burland V."/>
            <person name="Kodoyianni V."/>
            <person name="Schwartz D.C."/>
            <person name="Blattner F.R."/>
        </authorList>
    </citation>
    <scope>NUCLEOTIDE SEQUENCE [LARGE SCALE GENOMIC DNA]</scope>
    <source>
        <strain>ATCC 700931 / Ty2</strain>
    </source>
</reference>
<evidence type="ECO:0000255" key="1">
    <source>
        <dbReference type="HAMAP-Rule" id="MF_00330"/>
    </source>
</evidence>
<comment type="function">
    <text evidence="1">Part of the energy-coupling factor (ECF) transporter complex CbiMNOQ involved in cobalt import.</text>
</comment>
<comment type="pathway">
    <text evidence="1">Cofactor biosynthesis; adenosylcobalamin biosynthesis.</text>
</comment>
<comment type="subunit">
    <text evidence="1">Forms an energy-coupling factor (ECF) transporter complex composed of an ATP-binding protein (A component, CbiO), a transmembrane protein (T component, CbiQ) and 2 possible substrate-capture proteins (S components, CbiM and CbiN) of unknown stoichimetry.</text>
</comment>
<comment type="subcellular location">
    <subcellularLocation>
        <location evidence="1">Cell inner membrane</location>
        <topology evidence="1">Multi-pass membrane protein</topology>
    </subcellularLocation>
</comment>
<comment type="similarity">
    <text evidence="1">Belongs to the CbiN family.</text>
</comment>
<name>CBIN_SALTI</name>
<dbReference type="EMBL" id="AL513382">
    <property type="protein sequence ID" value="CAD02383.1"/>
    <property type="molecule type" value="Genomic_DNA"/>
</dbReference>
<dbReference type="EMBL" id="AE014613">
    <property type="protein sequence ID" value="AAO68536.1"/>
    <property type="molecule type" value="Genomic_DNA"/>
</dbReference>
<dbReference type="RefSeq" id="NP_456576.1">
    <property type="nucleotide sequence ID" value="NC_003198.1"/>
</dbReference>
<dbReference type="RefSeq" id="WP_000753216.1">
    <property type="nucleotide sequence ID" value="NZ_WSUR01000002.1"/>
</dbReference>
<dbReference type="STRING" id="220341.gene:17586138"/>
<dbReference type="KEGG" id="stt:t0852"/>
<dbReference type="KEGG" id="sty:STY2225"/>
<dbReference type="PATRIC" id="fig|220341.7.peg.2244"/>
<dbReference type="eggNOG" id="COG1930">
    <property type="taxonomic scope" value="Bacteria"/>
</dbReference>
<dbReference type="HOGENOM" id="CLU_136197_2_0_6"/>
<dbReference type="OMA" id="PWFQPLW"/>
<dbReference type="OrthoDB" id="1551318at2"/>
<dbReference type="UniPathway" id="UPA00148"/>
<dbReference type="Proteomes" id="UP000000541">
    <property type="component" value="Chromosome"/>
</dbReference>
<dbReference type="Proteomes" id="UP000002670">
    <property type="component" value="Chromosome"/>
</dbReference>
<dbReference type="GO" id="GO:0005886">
    <property type="term" value="C:plasma membrane"/>
    <property type="evidence" value="ECO:0007669"/>
    <property type="project" value="UniProtKB-SubCell"/>
</dbReference>
<dbReference type="GO" id="GO:0015087">
    <property type="term" value="F:cobalt ion transmembrane transporter activity"/>
    <property type="evidence" value="ECO:0007669"/>
    <property type="project" value="UniProtKB-UniRule"/>
</dbReference>
<dbReference type="GO" id="GO:0009236">
    <property type="term" value="P:cobalamin biosynthetic process"/>
    <property type="evidence" value="ECO:0007669"/>
    <property type="project" value="UniProtKB-UniRule"/>
</dbReference>
<dbReference type="HAMAP" id="MF_00330">
    <property type="entry name" value="CbiN"/>
    <property type="match status" value="1"/>
</dbReference>
<dbReference type="InterPro" id="IPR003705">
    <property type="entry name" value="CbiN"/>
</dbReference>
<dbReference type="NCBIfam" id="TIGR01165">
    <property type="entry name" value="cbiN"/>
    <property type="match status" value="1"/>
</dbReference>
<dbReference type="NCBIfam" id="NF002780">
    <property type="entry name" value="PRK02898.1"/>
    <property type="match status" value="1"/>
</dbReference>
<dbReference type="PANTHER" id="PTHR38662">
    <property type="entry name" value="COBALT TRANSPORT PROTEIN CBIN"/>
    <property type="match status" value="1"/>
</dbReference>
<dbReference type="PANTHER" id="PTHR38662:SF1">
    <property type="entry name" value="COBALT TRANSPORT PROTEIN CBIN"/>
    <property type="match status" value="1"/>
</dbReference>
<dbReference type="Pfam" id="PF02553">
    <property type="entry name" value="CbiN"/>
    <property type="match status" value="1"/>
</dbReference>
<keyword id="KW-0997">Cell inner membrane</keyword>
<keyword id="KW-1003">Cell membrane</keyword>
<keyword id="KW-0169">Cobalamin biosynthesis</keyword>
<keyword id="KW-0170">Cobalt</keyword>
<keyword id="KW-0171">Cobalt transport</keyword>
<keyword id="KW-0406">Ion transport</keyword>
<keyword id="KW-0472">Membrane</keyword>
<keyword id="KW-0812">Transmembrane</keyword>
<keyword id="KW-1133">Transmembrane helix</keyword>
<keyword id="KW-0813">Transport</keyword>
<feature type="chain" id="PRO_0000134697" description="Cobalt transport protein CbiN">
    <location>
        <begin position="1"/>
        <end position="93"/>
    </location>
</feature>
<feature type="transmembrane region" description="Helical" evidence="1">
    <location>
        <begin position="5"/>
        <end position="25"/>
    </location>
</feature>
<feature type="transmembrane region" description="Helical" evidence="1">
    <location>
        <begin position="63"/>
        <end position="83"/>
    </location>
</feature>
<organism>
    <name type="scientific">Salmonella typhi</name>
    <dbReference type="NCBI Taxonomy" id="90370"/>
    <lineage>
        <taxon>Bacteria</taxon>
        <taxon>Pseudomonadati</taxon>
        <taxon>Pseudomonadota</taxon>
        <taxon>Gammaproteobacteria</taxon>
        <taxon>Enterobacterales</taxon>
        <taxon>Enterobacteriaceae</taxon>
        <taxon>Salmonella</taxon>
    </lineage>
</organism>
<sequence>MKKTLMLLAMVVALVILPFFINHGGEYGGSDGEAESQIQALAPQYKPWFQPLYEPASGEIESLLFTLQGSLGAAVIFYILGYCKGKQRRDDRA</sequence>
<accession>Q8Z5N3</accession>
<protein>
    <recommendedName>
        <fullName evidence="1">Cobalt transport protein CbiN</fullName>
    </recommendedName>
    <alternativeName>
        <fullName evidence="1">Energy-coupling factor transporter probable substrate-capture protein CbiN</fullName>
        <shortName evidence="1">ECF transporter S component CbiN</shortName>
    </alternativeName>
</protein>
<proteinExistence type="inferred from homology"/>